<dbReference type="EC" id="2.1.1.309" evidence="2"/>
<dbReference type="EMBL" id="AB019233">
    <property type="protein sequence ID" value="BAA96951.1"/>
    <property type="molecule type" value="Genomic_DNA"/>
</dbReference>
<dbReference type="EMBL" id="CP002688">
    <property type="protein sequence ID" value="AED96876.1"/>
    <property type="molecule type" value="Genomic_DNA"/>
</dbReference>
<dbReference type="EMBL" id="AY065258">
    <property type="protein sequence ID" value="AAL38734.1"/>
    <property type="molecule type" value="mRNA"/>
</dbReference>
<dbReference type="EMBL" id="AY096365">
    <property type="protein sequence ID" value="AAM20006.1"/>
    <property type="molecule type" value="mRNA"/>
</dbReference>
<dbReference type="RefSeq" id="NP_200538.1">
    <property type="nucleotide sequence ID" value="NM_125110.6"/>
</dbReference>
<dbReference type="SMR" id="Q9LVD0"/>
<dbReference type="FunCoup" id="Q9LVD0">
    <property type="interactions" value="3831"/>
</dbReference>
<dbReference type="STRING" id="3702.Q9LVD0"/>
<dbReference type="PaxDb" id="3702-AT5G57280.1"/>
<dbReference type="ProteomicsDB" id="236977"/>
<dbReference type="EnsemblPlants" id="AT5G57280.1">
    <property type="protein sequence ID" value="AT5G57280.1"/>
    <property type="gene ID" value="AT5G57280"/>
</dbReference>
<dbReference type="GeneID" id="835833"/>
<dbReference type="Gramene" id="AT5G57280.1">
    <property type="protein sequence ID" value="AT5G57280.1"/>
    <property type="gene ID" value="AT5G57280"/>
</dbReference>
<dbReference type="KEGG" id="ath:AT5G57280"/>
<dbReference type="Araport" id="AT5G57280"/>
<dbReference type="TAIR" id="AT5G57280">
    <property type="gene designation" value="RID2"/>
</dbReference>
<dbReference type="eggNOG" id="KOG1541">
    <property type="taxonomic scope" value="Eukaryota"/>
</dbReference>
<dbReference type="HOGENOM" id="CLU_055194_0_2_1"/>
<dbReference type="InParanoid" id="Q9LVD0"/>
<dbReference type="OMA" id="WIQEKKE"/>
<dbReference type="PhylomeDB" id="Q9LVD0"/>
<dbReference type="CD-CODE" id="4299E36E">
    <property type="entry name" value="Nucleolus"/>
</dbReference>
<dbReference type="PRO" id="PR:Q9LVD0"/>
<dbReference type="Proteomes" id="UP000006548">
    <property type="component" value="Chromosome 5"/>
</dbReference>
<dbReference type="ExpressionAtlas" id="Q9LVD0">
    <property type="expression patterns" value="baseline and differential"/>
</dbReference>
<dbReference type="GO" id="GO:0005730">
    <property type="term" value="C:nucleolus"/>
    <property type="evidence" value="ECO:0000314"/>
    <property type="project" value="TAIR"/>
</dbReference>
<dbReference type="GO" id="GO:0005654">
    <property type="term" value="C:nucleoplasm"/>
    <property type="evidence" value="ECO:0007669"/>
    <property type="project" value="UniProtKB-SubCell"/>
</dbReference>
<dbReference type="GO" id="GO:0005634">
    <property type="term" value="C:nucleus"/>
    <property type="evidence" value="ECO:0000314"/>
    <property type="project" value="TAIR"/>
</dbReference>
<dbReference type="GO" id="GO:0048471">
    <property type="term" value="C:perinuclear region of cytoplasm"/>
    <property type="evidence" value="ECO:0007669"/>
    <property type="project" value="UniProtKB-SubCell"/>
</dbReference>
<dbReference type="GO" id="GO:0016435">
    <property type="term" value="F:rRNA (guanine) methyltransferase activity"/>
    <property type="evidence" value="ECO:0007669"/>
    <property type="project" value="InterPro"/>
</dbReference>
<dbReference type="GO" id="GO:1990110">
    <property type="term" value="P:callus formation"/>
    <property type="evidence" value="ECO:0000315"/>
    <property type="project" value="UniProtKB"/>
</dbReference>
<dbReference type="GO" id="GO:0048527">
    <property type="term" value="P:lateral root development"/>
    <property type="evidence" value="ECO:0000315"/>
    <property type="project" value="UniProtKB"/>
</dbReference>
<dbReference type="GO" id="GO:0010078">
    <property type="term" value="P:maintenance of root meristem identity"/>
    <property type="evidence" value="ECO:0000315"/>
    <property type="project" value="UniProtKB"/>
</dbReference>
<dbReference type="GO" id="GO:0048364">
    <property type="term" value="P:root development"/>
    <property type="evidence" value="ECO:0000315"/>
    <property type="project" value="UniProtKB"/>
</dbReference>
<dbReference type="GO" id="GO:0070476">
    <property type="term" value="P:rRNA (guanine-N7)-methylation"/>
    <property type="evidence" value="ECO:0007669"/>
    <property type="project" value="InterPro"/>
</dbReference>
<dbReference type="GO" id="GO:0006364">
    <property type="term" value="P:rRNA processing"/>
    <property type="evidence" value="ECO:0000315"/>
    <property type="project" value="TAIR"/>
</dbReference>
<dbReference type="CDD" id="cd02440">
    <property type="entry name" value="AdoMet_MTases"/>
    <property type="match status" value="1"/>
</dbReference>
<dbReference type="FunFam" id="3.40.50.150:FF:000017">
    <property type="entry name" value="probable 18S rRNA (Guanine-N(7))-methyltransferase"/>
    <property type="match status" value="1"/>
</dbReference>
<dbReference type="Gene3D" id="3.40.50.150">
    <property type="entry name" value="Vaccinia Virus protein VP39"/>
    <property type="match status" value="1"/>
</dbReference>
<dbReference type="InterPro" id="IPR039769">
    <property type="entry name" value="Bud23-like"/>
</dbReference>
<dbReference type="InterPro" id="IPR022238">
    <property type="entry name" value="Bud23_C"/>
</dbReference>
<dbReference type="InterPro" id="IPR013216">
    <property type="entry name" value="Methyltransf_11"/>
</dbReference>
<dbReference type="InterPro" id="IPR029063">
    <property type="entry name" value="SAM-dependent_MTases_sf"/>
</dbReference>
<dbReference type="PANTHER" id="PTHR12734:SF0">
    <property type="entry name" value="18S RRNA (GUANINE-N(7))-METHYLTRANSFERASE-RELATED"/>
    <property type="match status" value="1"/>
</dbReference>
<dbReference type="PANTHER" id="PTHR12734">
    <property type="entry name" value="METHYLTRANSFERASE-RELATED"/>
    <property type="match status" value="1"/>
</dbReference>
<dbReference type="Pfam" id="PF08241">
    <property type="entry name" value="Methyltransf_11"/>
    <property type="match status" value="1"/>
</dbReference>
<dbReference type="Pfam" id="PF12589">
    <property type="entry name" value="WBS_methylT"/>
    <property type="match status" value="1"/>
</dbReference>
<dbReference type="SUPFAM" id="SSF53335">
    <property type="entry name" value="S-adenosyl-L-methionine-dependent methyltransferases"/>
    <property type="match status" value="1"/>
</dbReference>
<evidence type="ECO:0000250" key="1">
    <source>
        <dbReference type="UniProtKB" id="O43709"/>
    </source>
</evidence>
<evidence type="ECO:0000250" key="2">
    <source>
        <dbReference type="UniProtKB" id="P25627"/>
    </source>
</evidence>
<evidence type="ECO:0000255" key="3">
    <source>
        <dbReference type="PROSITE-ProRule" id="PRU00768"/>
    </source>
</evidence>
<evidence type="ECO:0000256" key="4">
    <source>
        <dbReference type="SAM" id="MobiDB-lite"/>
    </source>
</evidence>
<evidence type="ECO:0000269" key="5">
    <source>
    </source>
</evidence>
<evidence type="ECO:0000269" key="6">
    <source>
    </source>
</evidence>
<evidence type="ECO:0000269" key="7">
    <source>
    </source>
</evidence>
<evidence type="ECO:0000303" key="8">
    <source>
    </source>
</evidence>
<evidence type="ECO:0000305" key="9"/>
<evidence type="ECO:0000312" key="10">
    <source>
        <dbReference type="Araport" id="AT5G57280"/>
    </source>
</evidence>
<evidence type="ECO:0000312" key="11">
    <source>
        <dbReference type="EMBL" id="BAA96951.1"/>
    </source>
</evidence>
<proteinExistence type="evidence at protein level"/>
<organism>
    <name type="scientific">Arabidopsis thaliana</name>
    <name type="common">Mouse-ear cress</name>
    <dbReference type="NCBI Taxonomy" id="3702"/>
    <lineage>
        <taxon>Eukaryota</taxon>
        <taxon>Viridiplantae</taxon>
        <taxon>Streptophyta</taxon>
        <taxon>Embryophyta</taxon>
        <taxon>Tracheophyta</taxon>
        <taxon>Spermatophyta</taxon>
        <taxon>Magnoliopsida</taxon>
        <taxon>eudicotyledons</taxon>
        <taxon>Gunneridae</taxon>
        <taxon>Pentapetalae</taxon>
        <taxon>rosids</taxon>
        <taxon>malvids</taxon>
        <taxon>Brassicales</taxon>
        <taxon>Brassicaceae</taxon>
        <taxon>Camelineae</taxon>
        <taxon>Arabidopsis</taxon>
    </lineage>
</organism>
<keyword id="KW-0963">Cytoplasm</keyword>
<keyword id="KW-0489">Methyltransferase</keyword>
<keyword id="KW-0539">Nucleus</keyword>
<keyword id="KW-1185">Reference proteome</keyword>
<keyword id="KW-0678">Repressor</keyword>
<keyword id="KW-0698">rRNA processing</keyword>
<keyword id="KW-0949">S-adenosyl-L-methionine</keyword>
<keyword id="KW-0346">Stress response</keyword>
<keyword id="KW-0808">Transferase</keyword>
<gene>
    <name evidence="8" type="primary">RID2</name>
    <name evidence="10" type="ordered locus">At5g57280</name>
    <name evidence="11" type="ORF">MJB24.9</name>
</gene>
<sequence>MSNRPELLAPPEIFYDDTEARKYTSSSRIVEIQAKLSERALELLALPEDGVPRFLLDIGCGSGLSGETLSEDGHHWIGLDISASMLHVAVEREVEGDLLLGDMGQGLGLRSGVIDGAISISAVQWLCNADKSSHEPRLRLKAFFGSLYRCLSRGARAVFQVYPENIAQRELILRQALQAGFGGGLVVDYPHSTKKRKEFLVLTCGTVQTSIQTSKNEYDESCSEDDNSDDEESEEVGVSDRNRPRKRQRTNTKVKGREWVLRKKEQSRRKGKNVPADSKFTSRKRRTRF</sequence>
<feature type="chain" id="PRO_0000442038" description="18S rRNA (guanine-N(7))-methyltransferase RID2">
    <location>
        <begin position="1"/>
        <end position="289"/>
    </location>
</feature>
<feature type="region of interest" description="Disordered" evidence="4">
    <location>
        <begin position="215"/>
        <end position="289"/>
    </location>
</feature>
<feature type="short sequence motif" description="Nuclear localization signal" evidence="3">
    <location>
        <begin position="268"/>
        <end position="275"/>
    </location>
</feature>
<feature type="compositionally biased region" description="Acidic residues" evidence="4">
    <location>
        <begin position="219"/>
        <end position="237"/>
    </location>
</feature>
<feature type="compositionally biased region" description="Basic residues" evidence="4">
    <location>
        <begin position="243"/>
        <end position="254"/>
    </location>
</feature>
<feature type="compositionally biased region" description="Basic and acidic residues" evidence="4">
    <location>
        <begin position="255"/>
        <end position="264"/>
    </location>
</feature>
<feature type="mutagenesis site" description="In rid2-1; temperature-sensitive mutant with altered reactivation of cell proliferation in the hypocotyl stele during callus formation from hypocotyl and root explants above 28 degrees Celsius. Impaired initiation of lateral root primordia formation. Exhibits abnormalities in the formation of the root apical meristem (RAM). Various (acute and non-acute) temperature sensitive inhibitory effects on different aspects of cell proliferation leading to reduced roots and leaves development during seedling growth. Nucleolar vacuolation and excessive accumulation of various intermediates of pre-rRNA processing. Abnormally swollen cells during culture on callus-inducing medium (CIM) with extraordinarily large nucleoli." evidence="5 6">
    <original>R</original>
    <variation>C</variation>
    <location>
        <position position="110"/>
    </location>
</feature>
<accession>Q9LVD0</accession>
<name>RID2_ARATH</name>
<reference key="1">
    <citation type="journal article" date="2000" name="DNA Res.">
        <title>Structural analysis of Arabidopsis thaliana chromosome 5. X. Sequence features of the regions of 3,076,755 bp covered by sixty P1 and TAC clones.</title>
        <authorList>
            <person name="Sato S."/>
            <person name="Nakamura Y."/>
            <person name="Kaneko T."/>
            <person name="Katoh T."/>
            <person name="Asamizu E."/>
            <person name="Kotani H."/>
            <person name="Tabata S."/>
        </authorList>
    </citation>
    <scope>NUCLEOTIDE SEQUENCE [LARGE SCALE GENOMIC DNA]</scope>
    <source>
        <strain>cv. Columbia</strain>
    </source>
</reference>
<reference key="2">
    <citation type="journal article" date="2017" name="Plant J.">
        <title>Araport11: a complete reannotation of the Arabidopsis thaliana reference genome.</title>
        <authorList>
            <person name="Cheng C.Y."/>
            <person name="Krishnakumar V."/>
            <person name="Chan A.P."/>
            <person name="Thibaud-Nissen F."/>
            <person name="Schobel S."/>
            <person name="Town C.D."/>
        </authorList>
    </citation>
    <scope>GENOME REANNOTATION</scope>
    <source>
        <strain>cv. Columbia</strain>
    </source>
</reference>
<reference key="3">
    <citation type="journal article" date="2003" name="Science">
        <title>Empirical analysis of transcriptional activity in the Arabidopsis genome.</title>
        <authorList>
            <person name="Yamada K."/>
            <person name="Lim J."/>
            <person name="Dale J.M."/>
            <person name="Chen H."/>
            <person name="Shinn P."/>
            <person name="Palm C.J."/>
            <person name="Southwick A.M."/>
            <person name="Wu H.C."/>
            <person name="Kim C.J."/>
            <person name="Nguyen M."/>
            <person name="Pham P.K."/>
            <person name="Cheuk R.F."/>
            <person name="Karlin-Newmann G."/>
            <person name="Liu S.X."/>
            <person name="Lam B."/>
            <person name="Sakano H."/>
            <person name="Wu T."/>
            <person name="Yu G."/>
            <person name="Miranda M."/>
            <person name="Quach H.L."/>
            <person name="Tripp M."/>
            <person name="Chang C.H."/>
            <person name="Lee J.M."/>
            <person name="Toriumi M.J."/>
            <person name="Chan M.M."/>
            <person name="Tang C.C."/>
            <person name="Onodera C.S."/>
            <person name="Deng J.M."/>
            <person name="Akiyama K."/>
            <person name="Ansari Y."/>
            <person name="Arakawa T."/>
            <person name="Banh J."/>
            <person name="Banno F."/>
            <person name="Bowser L."/>
            <person name="Brooks S.Y."/>
            <person name="Carninci P."/>
            <person name="Chao Q."/>
            <person name="Choy N."/>
            <person name="Enju A."/>
            <person name="Goldsmith A.D."/>
            <person name="Gurjal M."/>
            <person name="Hansen N.F."/>
            <person name="Hayashizaki Y."/>
            <person name="Johnson-Hopson C."/>
            <person name="Hsuan V.W."/>
            <person name="Iida K."/>
            <person name="Karnes M."/>
            <person name="Khan S."/>
            <person name="Koesema E."/>
            <person name="Ishida J."/>
            <person name="Jiang P.X."/>
            <person name="Jones T."/>
            <person name="Kawai J."/>
            <person name="Kamiya A."/>
            <person name="Meyers C."/>
            <person name="Nakajima M."/>
            <person name="Narusaka M."/>
            <person name="Seki M."/>
            <person name="Sakurai T."/>
            <person name="Satou M."/>
            <person name="Tamse R."/>
            <person name="Vaysberg M."/>
            <person name="Wallender E.K."/>
            <person name="Wong C."/>
            <person name="Yamamura Y."/>
            <person name="Yuan S."/>
            <person name="Shinozaki K."/>
            <person name="Davis R.W."/>
            <person name="Theologis A."/>
            <person name="Ecker J.R."/>
        </authorList>
    </citation>
    <scope>NUCLEOTIDE SEQUENCE [LARGE SCALE MRNA]</scope>
    <source>
        <strain>cv. Columbia</strain>
    </source>
</reference>
<reference key="4">
    <citation type="journal article" date="2003" name="Development">
        <title>Genetic analysis of adventitious root formation with a novel series of temperature-sensitive mutants of Arabidopsis thaliana.</title>
        <authorList>
            <person name="Konishi M."/>
            <person name="Sugiyama M."/>
        </authorList>
    </citation>
    <scope>FUNCTION</scope>
    <scope>MUTAGENESIS OF ARG-110</scope>
    <source>
        <strain>cv. Landsberg erecta</strain>
    </source>
</reference>
<reference key="5">
    <citation type="journal article" date="2011" name="Plant J.">
        <title>Genetic identification of Arabidopsis RID2 as an essential factor involved in pre-rRNA processing.</title>
        <authorList>
            <person name="Ohbayashi I."/>
            <person name="Konishi M."/>
            <person name="Ebine K."/>
            <person name="Sugiyama M."/>
        </authorList>
    </citation>
    <scope>FUNCTION</scope>
    <scope>DISRUPTION PHENOTYPE</scope>
    <scope>MUTAGENESIS OF ARG-110</scope>
    <scope>SUBCELLULAR LOCATION</scope>
    <scope>TISSUE SPECIFICITY</scope>
    <scope>DEVELOPMENTAL STAGE</scope>
    <source>
        <strain>cv. Columbia</strain>
        <strain>cv. Landsberg erecta</strain>
    </source>
</reference>
<reference key="6">
    <citation type="journal article" date="2016" name="Biol. Open">
        <title>A genetic link between epigenetic repressor AS1-AS2 and a putative small subunit processome in leaf polarity establishment of Arabidopsis.</title>
        <authorList>
            <person name="Matsumura Y."/>
            <person name="Ohbayashi I."/>
            <person name="Takahashi H."/>
            <person name="Kojima S."/>
            <person name="Ishibashi N."/>
            <person name="Keta S."/>
            <person name="Nakagawa A."/>
            <person name="Hayashi R."/>
            <person name="Saez-Vasquez J."/>
            <person name="Echeverria M."/>
            <person name="Sugiyama M."/>
            <person name="Nakamura K."/>
            <person name="Machida C."/>
            <person name="Machida Y."/>
        </authorList>
    </citation>
    <scope>FUNCTION</scope>
    <scope>DISRUPTION PHENOTYPE</scope>
</reference>
<comment type="function">
    <text evidence="2 5 6 7">Essential protein (PubMed:21401745). S-adenosyl-L-methionine-dependent methyltransferase that specifically methylates the N(7) position of a guanine in 18S rRNA. Requires the methyltransferase adapter protein TRM112 for full rRNA methyltransferase activity. Important for biogenesis end export of the 40S ribosomal subunit independent on its methyltransferase activity (By similarity). Involved in the pre-rRNA processing steps in the nucleolus leading to small-subunit rRNA production independently of its RNA-modifying catalytic activity. Supports cell proliferation (PubMed:21401745). Required for the initiation of lateral root primordia formation and for the root apical meristem (RAM) organization as well as for leaves development (PubMed:14522871). During callus formation from hypocotyl and root explants, required for the initial stage of reactivation of cell proliferation in the hypocotyl stele (PubMed:21401745). Involved in leaf polarity establishment by functioning cooperatively with AS2 to repress abaxial genes ARF3, ARF4, KAN1, KAN2, YAB1 and YAB5, and the knox homeobox genes KNAT1, KNAT2, KNAT6, and STM to promote adaxial development in leaf primordia at shoot apical meristems at high temperatures (PubMed:27334696).</text>
</comment>
<comment type="catalytic activity">
    <reaction evidence="2">
        <text>guanosine(1575) in yeast 18S rRNA + S-adenosyl-L-methionine = N(7)-methylguanosine(1575) in yeast 18S rRNA + S-adenosyl-L-homocysteine</text>
        <dbReference type="Rhea" id="RHEA:43172"/>
        <dbReference type="Rhea" id="RHEA-COMP:10387"/>
        <dbReference type="Rhea" id="RHEA-COMP:10388"/>
        <dbReference type="ChEBI" id="CHEBI:57856"/>
        <dbReference type="ChEBI" id="CHEBI:59789"/>
        <dbReference type="ChEBI" id="CHEBI:74269"/>
        <dbReference type="ChEBI" id="CHEBI:74480"/>
        <dbReference type="EC" id="2.1.1.309"/>
    </reaction>
</comment>
<comment type="subcellular location">
    <subcellularLocation>
        <location evidence="3 6">Nucleus</location>
    </subcellularLocation>
    <subcellularLocation>
        <location evidence="1">Nucleus</location>
        <location evidence="1">Nucleoplasm</location>
    </subcellularLocation>
    <subcellularLocation>
        <location evidence="1">Cytoplasm</location>
        <location evidence="1">Perinuclear region</location>
    </subcellularLocation>
    <subcellularLocation>
        <location evidence="2">Cytoplasm</location>
    </subcellularLocation>
    <subcellularLocation>
        <location evidence="6">Nucleus</location>
        <location evidence="6">Nucleolus</location>
    </subcellularLocation>
</comment>
<comment type="tissue specificity">
    <text evidence="6">Expressed in seedlings, roots and flowers.</text>
</comment>
<comment type="developmental stage">
    <text evidence="6">In seedlings, expressed in the subapical region of the primary roots, in lateral root primordia, in developing trichomes and in stipules. In flowers, observed in pollens, embryo sacs and embryos. In roots, present at low levels in the stele. When grown on callus-inducing medium (CIM), accumulates strongly in the root stele where callus formation starts.</text>
</comment>
<comment type="disruption phenotype">
    <text evidence="6 7">Plants homozygous for the rid2-2 or rid2-3 mutation are lethal (PubMed:21401745). Exhibits pointed leaves. Plants with double mutations in this protein and in AS2 have short filamentous leaves at high temperatures (PubMed:27334696).</text>
</comment>
<comment type="similarity">
    <text evidence="9">Belongs to the class I-like SAM-binding methyltransferase superfamily. BUD23/WBSCR22 family.</text>
</comment>
<protein>
    <recommendedName>
        <fullName evidence="9">18S rRNA (guanine-N(7))-methyltransferase RID2</fullName>
        <ecNumber evidence="2">2.1.1.309</ecNumber>
    </recommendedName>
    <alternativeName>
        <fullName evidence="8">Protein ROOT INITIATION DEFECTIVE 2</fullName>
    </alternativeName>
</protein>